<accession>Q91ZT9</accession>
<accession>Q8R178</accession>
<name>ASB8_MOUSE</name>
<gene>
    <name type="primary">Asb8</name>
</gene>
<proteinExistence type="evidence at transcript level"/>
<protein>
    <recommendedName>
        <fullName>Ankyrin repeat and SOCS box protein 8</fullName>
        <shortName>ASB-8</shortName>
    </recommendedName>
</protein>
<keyword id="KW-0040">ANK repeat</keyword>
<keyword id="KW-0963">Cytoplasm</keyword>
<keyword id="KW-0597">Phosphoprotein</keyword>
<keyword id="KW-1185">Reference proteome</keyword>
<keyword id="KW-0677">Repeat</keyword>
<keyword id="KW-0833">Ubl conjugation pathway</keyword>
<evidence type="ECO:0000250" key="1"/>
<evidence type="ECO:0000250" key="2">
    <source>
        <dbReference type="UniProtKB" id="Q9H765"/>
    </source>
</evidence>
<evidence type="ECO:0000255" key="3">
    <source>
        <dbReference type="PROSITE-ProRule" id="PRU00194"/>
    </source>
</evidence>
<evidence type="ECO:0000305" key="4"/>
<feature type="chain" id="PRO_0000066939" description="Ankyrin repeat and SOCS box protein 8">
    <location>
        <begin position="1"/>
        <end position="288"/>
    </location>
</feature>
<feature type="repeat" description="ANK 1">
    <location>
        <begin position="52"/>
        <end position="81"/>
    </location>
</feature>
<feature type="repeat" description="ANK 2">
    <location>
        <begin position="85"/>
        <end position="113"/>
    </location>
</feature>
<feature type="repeat" description="ANK 3">
    <location>
        <begin position="117"/>
        <end position="146"/>
    </location>
</feature>
<feature type="repeat" description="ANK 4">
    <location>
        <begin position="150"/>
        <end position="179"/>
    </location>
</feature>
<feature type="domain" description="SOCS box" evidence="3">
    <location>
        <begin position="235"/>
        <end position="288"/>
    </location>
</feature>
<feature type="modified residue" description="Phosphoserine" evidence="2">
    <location>
        <position position="17"/>
    </location>
</feature>
<feature type="sequence conflict" description="In Ref. 2; AAH25106." evidence="4" ref="2">
    <original>R</original>
    <variation>K</variation>
    <location>
        <position position="96"/>
    </location>
</feature>
<comment type="function">
    <text evidence="2">May be a substrate-recognition component of a SCF-like ECS (Elongin-Cullin-SOCS-box protein) E3 ubiquitin-protein ligase complex which mediates the ubiquitination and subsequent proteasomal degradation of target proteins. Inhibits IFN-beta production through the IRF3 signaling pathway by targeting TBK1 via 'Lys-48'-linked ubiquitination, leading to its proteasomal degradation.</text>
</comment>
<comment type="pathway">
    <text>Protein modification; protein ubiquitination.</text>
</comment>
<comment type="subunit">
    <text evidence="2">Interacts with TBK1; this interaction promotes TBK1 proteasomal degradation.</text>
</comment>
<comment type="subcellular location">
    <subcellularLocation>
        <location evidence="2">Cytoplasm</location>
    </subcellularLocation>
</comment>
<comment type="domain">
    <text evidence="1">The SOCS box domain mediates the interaction with the Elongin BC complex, an adapter module in different E3 ubiquitin-protein ligase complexes.</text>
</comment>
<comment type="PTM">
    <text evidence="2">Phosphorylated by TBK1.</text>
</comment>
<comment type="similarity">
    <text evidence="4">Belongs to the ankyrin SOCS box (ASB) family.</text>
</comment>
<organism>
    <name type="scientific">Mus musculus</name>
    <name type="common">Mouse</name>
    <dbReference type="NCBI Taxonomy" id="10090"/>
    <lineage>
        <taxon>Eukaryota</taxon>
        <taxon>Metazoa</taxon>
        <taxon>Chordata</taxon>
        <taxon>Craniata</taxon>
        <taxon>Vertebrata</taxon>
        <taxon>Euteleostomi</taxon>
        <taxon>Mammalia</taxon>
        <taxon>Eutheria</taxon>
        <taxon>Euarchontoglires</taxon>
        <taxon>Glires</taxon>
        <taxon>Rodentia</taxon>
        <taxon>Myomorpha</taxon>
        <taxon>Muroidea</taxon>
        <taxon>Muridae</taxon>
        <taxon>Murinae</taxon>
        <taxon>Mus</taxon>
        <taxon>Mus</taxon>
    </lineage>
</organism>
<sequence>MSSSMWYIMQSIQSKYSLSERLIRTIAAIRSFPHDNVEDLIRGGADVNCTHGTLKPLHCACMVSDADCVELLLEKGAEVNALDGYNRTALHYAAERDEACVEVLLEYGANPNALDGNRDTPLHWAAFKNNAECVRALLESGASVNALDYNNDTPLSWAAMKGNLESVSILLDYGAEVRVINLKGQTPISRLVALLVRGLGTEKEDSCFELLHRAVGQFELRKNGIMPREVTKDQQLCEKLTVLCSAPGTLKTLARYAVRRSLGLQYLPDAVKGLPLPVSLKDYLLLLE</sequence>
<dbReference type="EMBL" id="AF398969">
    <property type="protein sequence ID" value="AAK97491.1"/>
    <property type="molecule type" value="mRNA"/>
</dbReference>
<dbReference type="EMBL" id="BC025106">
    <property type="protein sequence ID" value="AAH25106.1"/>
    <property type="molecule type" value="mRNA"/>
</dbReference>
<dbReference type="CCDS" id="CCDS27787.1"/>
<dbReference type="RefSeq" id="NP_001164181.1">
    <property type="nucleotide sequence ID" value="NM_001170710.1"/>
</dbReference>
<dbReference type="RefSeq" id="NP_001164182.1">
    <property type="nucleotide sequence ID" value="NM_001170711.1"/>
</dbReference>
<dbReference type="RefSeq" id="NP_084397.3">
    <property type="nucleotide sequence ID" value="NM_030121.4"/>
</dbReference>
<dbReference type="RefSeq" id="XP_006521605.1">
    <property type="nucleotide sequence ID" value="XM_006521542.3"/>
</dbReference>
<dbReference type="RefSeq" id="XP_011244077.1">
    <property type="nucleotide sequence ID" value="XM_011245775.2"/>
</dbReference>
<dbReference type="SMR" id="Q91ZT9"/>
<dbReference type="FunCoup" id="Q91ZT9">
    <property type="interactions" value="135"/>
</dbReference>
<dbReference type="STRING" id="10090.ENSMUSP00000115813"/>
<dbReference type="iPTMnet" id="Q91ZT9"/>
<dbReference type="PhosphoSitePlus" id="Q91ZT9"/>
<dbReference type="PaxDb" id="10090-ENSMUSP00000115813"/>
<dbReference type="ProteomicsDB" id="277253"/>
<dbReference type="DNASU" id="78541"/>
<dbReference type="GeneID" id="78541"/>
<dbReference type="KEGG" id="mmu:78541"/>
<dbReference type="UCSC" id="uc007xlx.2">
    <property type="organism name" value="mouse"/>
</dbReference>
<dbReference type="AGR" id="MGI:1925791"/>
<dbReference type="CTD" id="140461"/>
<dbReference type="MGI" id="MGI:1925791">
    <property type="gene designation" value="Asb8"/>
</dbReference>
<dbReference type="eggNOG" id="KOG0504">
    <property type="taxonomic scope" value="Eukaryota"/>
</dbReference>
<dbReference type="InParanoid" id="Q91ZT9"/>
<dbReference type="OrthoDB" id="10258888at2759"/>
<dbReference type="TreeFam" id="TF332452"/>
<dbReference type="Reactome" id="R-MMU-8951664">
    <property type="pathway name" value="Neddylation"/>
</dbReference>
<dbReference type="Reactome" id="R-MMU-983168">
    <property type="pathway name" value="Antigen processing: Ubiquitination &amp; Proteasome degradation"/>
</dbReference>
<dbReference type="UniPathway" id="UPA00143"/>
<dbReference type="BioGRID-ORCS" id="78541">
    <property type="hits" value="2 hits in 78 CRISPR screens"/>
</dbReference>
<dbReference type="ChiTaRS" id="Asb8">
    <property type="organism name" value="mouse"/>
</dbReference>
<dbReference type="PRO" id="PR:Q91ZT9"/>
<dbReference type="Proteomes" id="UP000000589">
    <property type="component" value="Unplaced"/>
</dbReference>
<dbReference type="RNAct" id="Q91ZT9">
    <property type="molecule type" value="protein"/>
</dbReference>
<dbReference type="GO" id="GO:0005737">
    <property type="term" value="C:cytoplasm"/>
    <property type="evidence" value="ECO:0007669"/>
    <property type="project" value="UniProtKB-SubCell"/>
</dbReference>
<dbReference type="GO" id="GO:0035556">
    <property type="term" value="P:intracellular signal transduction"/>
    <property type="evidence" value="ECO:0007669"/>
    <property type="project" value="InterPro"/>
</dbReference>
<dbReference type="GO" id="GO:0016567">
    <property type="term" value="P:protein ubiquitination"/>
    <property type="evidence" value="ECO:0007669"/>
    <property type="project" value="UniProtKB-UniPathway"/>
</dbReference>
<dbReference type="CDD" id="cd03727">
    <property type="entry name" value="SOCS_ASB8"/>
    <property type="match status" value="1"/>
</dbReference>
<dbReference type="FunFam" id="1.10.750.20:FF:000001">
    <property type="entry name" value="Ankyrin repeat and SOCS box containing 1"/>
    <property type="match status" value="1"/>
</dbReference>
<dbReference type="FunFam" id="1.25.40.20:FF:000274">
    <property type="entry name" value="Ankyrin repeat and SOCS box containing 8"/>
    <property type="match status" value="1"/>
</dbReference>
<dbReference type="Gene3D" id="1.25.40.20">
    <property type="entry name" value="Ankyrin repeat-containing domain"/>
    <property type="match status" value="2"/>
</dbReference>
<dbReference type="Gene3D" id="1.10.750.20">
    <property type="entry name" value="SOCS box"/>
    <property type="match status" value="1"/>
</dbReference>
<dbReference type="InterPro" id="IPR002110">
    <property type="entry name" value="Ankyrin_rpt"/>
</dbReference>
<dbReference type="InterPro" id="IPR036770">
    <property type="entry name" value="Ankyrin_rpt-contain_sf"/>
</dbReference>
<dbReference type="InterPro" id="IPR037332">
    <property type="entry name" value="ASB8_SOCS"/>
</dbReference>
<dbReference type="InterPro" id="IPR001496">
    <property type="entry name" value="SOCS_box"/>
</dbReference>
<dbReference type="InterPro" id="IPR036036">
    <property type="entry name" value="SOCS_box-like_dom_sf"/>
</dbReference>
<dbReference type="PANTHER" id="PTHR24134:SF9">
    <property type="entry name" value="ANKYRIN REPEAT AND SOCS BOX PROTEIN 8"/>
    <property type="match status" value="1"/>
</dbReference>
<dbReference type="PANTHER" id="PTHR24134">
    <property type="entry name" value="ANKYRIN REPEAT-CONTAINING PROTEIN DDB_G0279043"/>
    <property type="match status" value="1"/>
</dbReference>
<dbReference type="Pfam" id="PF12796">
    <property type="entry name" value="Ank_2"/>
    <property type="match status" value="1"/>
</dbReference>
<dbReference type="Pfam" id="PF13637">
    <property type="entry name" value="Ank_4"/>
    <property type="match status" value="1"/>
</dbReference>
<dbReference type="Pfam" id="PF07525">
    <property type="entry name" value="SOCS_box"/>
    <property type="match status" value="1"/>
</dbReference>
<dbReference type="SMART" id="SM00248">
    <property type="entry name" value="ANK"/>
    <property type="match status" value="4"/>
</dbReference>
<dbReference type="SMART" id="SM00969">
    <property type="entry name" value="SOCS_box"/>
    <property type="match status" value="1"/>
</dbReference>
<dbReference type="SUPFAM" id="SSF48403">
    <property type="entry name" value="Ankyrin repeat"/>
    <property type="match status" value="1"/>
</dbReference>
<dbReference type="SUPFAM" id="SSF158235">
    <property type="entry name" value="SOCS box-like"/>
    <property type="match status" value="1"/>
</dbReference>
<dbReference type="PROSITE" id="PS50297">
    <property type="entry name" value="ANK_REP_REGION"/>
    <property type="match status" value="1"/>
</dbReference>
<dbReference type="PROSITE" id="PS50088">
    <property type="entry name" value="ANK_REPEAT"/>
    <property type="match status" value="4"/>
</dbReference>
<dbReference type="PROSITE" id="PS50225">
    <property type="entry name" value="SOCS"/>
    <property type="match status" value="1"/>
</dbReference>
<reference key="1">
    <citation type="journal article" date="2001" name="Mol. Cell. Biol.">
        <title>Functional analysis of Asb-1 using genetic modification in mice.</title>
        <authorList>
            <person name="Kile B.T."/>
            <person name="Metcalf D."/>
            <person name="Mifsud S."/>
            <person name="DiRago L."/>
            <person name="Nicola N.A."/>
            <person name="Hilton D.J."/>
            <person name="Alexander W.S."/>
        </authorList>
    </citation>
    <scope>NUCLEOTIDE SEQUENCE [MRNA]</scope>
</reference>
<reference key="2">
    <citation type="journal article" date="2004" name="Genome Res.">
        <title>The status, quality, and expansion of the NIH full-length cDNA project: the Mammalian Gene Collection (MGC).</title>
        <authorList>
            <consortium name="The MGC Project Team"/>
        </authorList>
    </citation>
    <scope>NUCLEOTIDE SEQUENCE [LARGE SCALE MRNA]</scope>
    <source>
        <tissue>Liver</tissue>
    </source>
</reference>